<name>CDR1_CANAX</name>
<proteinExistence type="inferred from homology"/>
<keyword id="KW-0046">Antibiotic resistance</keyword>
<keyword id="KW-0067">ATP-binding</keyword>
<keyword id="KW-0196">Cycloheximide resistance</keyword>
<keyword id="KW-0325">Glycoprotein</keyword>
<keyword id="KW-0472">Membrane</keyword>
<keyword id="KW-0547">Nucleotide-binding</keyword>
<keyword id="KW-0677">Repeat</keyword>
<keyword id="KW-0812">Transmembrane</keyword>
<keyword id="KW-1133">Transmembrane helix</keyword>
<keyword id="KW-0813">Transport</keyword>
<evidence type="ECO:0000255" key="1"/>
<evidence type="ECO:0000255" key="2">
    <source>
        <dbReference type="PROSITE-ProRule" id="PRU00434"/>
    </source>
</evidence>
<evidence type="ECO:0000256" key="3">
    <source>
        <dbReference type="SAM" id="MobiDB-lite"/>
    </source>
</evidence>
<evidence type="ECO:0000305" key="4"/>
<organism>
    <name type="scientific">Candida albicans</name>
    <name type="common">Yeast</name>
    <dbReference type="NCBI Taxonomy" id="5476"/>
    <lineage>
        <taxon>Eukaryota</taxon>
        <taxon>Fungi</taxon>
        <taxon>Dikarya</taxon>
        <taxon>Ascomycota</taxon>
        <taxon>Saccharomycotina</taxon>
        <taxon>Pichiomycetes</taxon>
        <taxon>Debaryomycetaceae</taxon>
        <taxon>Candida/Lodderomyces clade</taxon>
        <taxon>Candida</taxon>
    </lineage>
</organism>
<protein>
    <recommendedName>
        <fullName>Multidrug resistance protein CDR1</fullName>
    </recommendedName>
</protein>
<accession>P43071</accession>
<sequence length="1501" mass="169938">MSDSKMSSQDESKLEKAISQDSSSENHSINEYHGFDAHTSENIQNLARTFTHDSFKDDSSAGLLKYLTHMSEVPGVNPYEHEEINNDQLNPDSENFNAKFWVKNLRKLFESDPEYYKPSKLGIGYRNLRAYGVANDSDYQPTVTNALWKLATEGFRHFQKDDDSRYFDILKSMDAIMRPGELTVVLGRPGAGCSTLLKTIAVNTYGFHIGKESQITYDGLSPHDIERHYRGDVIYSAETDVHFPHLSVGDTLEFAARLRTPQNRGEGIDRETYAKHMASVYMATYGLSHTRNTNVGNDFVRGVSGGERKRVSIAEASLSGANIQCWDNATRGLDSATALEFIRALKTSAVILDTTPLIAIYQCSQDAYDLFDKVVVLYEGYQIFFGKATKAKEYFEKMGWKCPQRQTTADFLTSLTNPAEREPLPGYEDKVPRTAQEFETYWKNSPEYAELTKEIDEYFVECERSNTRETYRESHVAKQSNNTRPASPYTVSFFMQVRYGVARNFLRMKGDPSIPIFSVFGQLVMGLILSSVFYNLSQTTGSFYYRGAAMFFAVLFNAFSSLLEIMSLFEARPIVEKHKKYALYRPSADALASIISELPVKLAMSMSFNFVFYFMVNFRRNPGRFFFYWLMCIWCTFVMSHLFRSIGAVSTSISGAMTPATVLLLAMVIYTGFVIPTPSMLGWSRWINYINPVGYVFESLMVNEFHGREFQCAQYVPSGPGYENISRSNQVCTAVGSVPGNEMVSGTNYLAGAYQYYNSHKWRNLGITIGFAVFFLAIYIALTEFNKGAMQKGEIVLFLKGSLKKHKRKTAASNKGDIEAGPVAGKLDYQDEAEAVNNEKFTEKGSTGSVDFPENREIFFWRDLTYQVKIKKEDRVILDHVDGWVKPGQITALMGASGAGKTTLLNCLSERVTTGIITDGERLVNGHALDSSFQRSIGYVQQQDVHLPTSTVREALQFSAYLRQSNKISKKEKDDYVDYVIDLLEMTDYADALVGVAGEGLNVEQRKRLTIGVELVAKPKLLLFLDEPTSGLDSQTAWSICKLMRKLADHGQAILCTIHQPSALIMAEFDRLLFLQKGGRTAYFGELGENCQTMINYFEKYGADPCPKEANPAEWMLQVVGAAPGSHAKQDYFEVWRNSSEYQAVREEINRMEAELSKLPRDNDPEALLKYAAPLWKQYLLVSWRTIVQDWRSPGYIYSKIFLVVSAALFNGFSFFKAKNNMQGLQNQMFSVFMFFIPFNTLVQQMLPYFVKQRDVYEVREAPSRTFSWFAFIAGQITSEIPYQVAVGTIAFFCWYYPLGLYNNATPTDSVNPRGVLMWMLVTAFYVYTATMGQLCMSFSELADNAANLATLLFTMCLNFCGVLAGPDVLPGFWIFMYRCNPFTYLVQAMLSTGLANTFVKCAEREYVSVKPPNGESCSTYLDPYIKFAGGYFETRNDGSCAFCQMSSTNTFLKSVNSLYSERWRNFGIFIAFIAINIILTVIFYWLARVPKGNREKKNKK</sequence>
<dbReference type="EMBL" id="X77589">
    <property type="protein sequence ID" value="CAA54692.1"/>
    <property type="molecule type" value="Genomic_DNA"/>
</dbReference>
<dbReference type="PIR" id="S57198">
    <property type="entry name" value="S57198"/>
</dbReference>
<dbReference type="SMR" id="P43071"/>
<dbReference type="BindingDB" id="P43071"/>
<dbReference type="ChEMBL" id="CHEMBL1163109"/>
<dbReference type="TCDB" id="3.A.1.205.4">
    <property type="family name" value="the atp-binding cassette (abc) superfamily"/>
</dbReference>
<dbReference type="GlyCosmos" id="P43071">
    <property type="glycosylation" value="2 sites, No reported glycans"/>
</dbReference>
<dbReference type="VEuPathDB" id="FungiDB:C3_05220W_A"/>
<dbReference type="VEuPathDB" id="FungiDB:CAWG_02836"/>
<dbReference type="GO" id="GO:0016020">
    <property type="term" value="C:membrane"/>
    <property type="evidence" value="ECO:0007669"/>
    <property type="project" value="UniProtKB-SubCell"/>
</dbReference>
<dbReference type="GO" id="GO:0140359">
    <property type="term" value="F:ABC-type transporter activity"/>
    <property type="evidence" value="ECO:0007669"/>
    <property type="project" value="InterPro"/>
</dbReference>
<dbReference type="GO" id="GO:0005524">
    <property type="term" value="F:ATP binding"/>
    <property type="evidence" value="ECO:0007669"/>
    <property type="project" value="UniProtKB-KW"/>
</dbReference>
<dbReference type="GO" id="GO:0016887">
    <property type="term" value="F:ATP hydrolysis activity"/>
    <property type="evidence" value="ECO:0007669"/>
    <property type="project" value="InterPro"/>
</dbReference>
<dbReference type="GO" id="GO:0046677">
    <property type="term" value="P:response to antibiotic"/>
    <property type="evidence" value="ECO:0007669"/>
    <property type="project" value="UniProtKB-KW"/>
</dbReference>
<dbReference type="GO" id="GO:0046898">
    <property type="term" value="P:response to cycloheximide"/>
    <property type="evidence" value="ECO:0007669"/>
    <property type="project" value="UniProtKB-KW"/>
</dbReference>
<dbReference type="GO" id="GO:1990961">
    <property type="term" value="P:xenobiotic detoxification by transmembrane export across the plasma membrane"/>
    <property type="evidence" value="ECO:0007669"/>
    <property type="project" value="InterPro"/>
</dbReference>
<dbReference type="CDD" id="cd03233">
    <property type="entry name" value="ABCG_PDR_domain1"/>
    <property type="match status" value="1"/>
</dbReference>
<dbReference type="CDD" id="cd03232">
    <property type="entry name" value="ABCG_PDR_domain2"/>
    <property type="match status" value="1"/>
</dbReference>
<dbReference type="FunFam" id="3.40.50.300:FF:000054">
    <property type="entry name" value="ABC multidrug transporter atrF"/>
    <property type="match status" value="1"/>
</dbReference>
<dbReference type="FunFam" id="3.40.50.300:FF:001262">
    <property type="entry name" value="ABC transporter CDR4"/>
    <property type="match status" value="1"/>
</dbReference>
<dbReference type="Gene3D" id="3.40.50.300">
    <property type="entry name" value="P-loop containing nucleotide triphosphate hydrolases"/>
    <property type="match status" value="2"/>
</dbReference>
<dbReference type="InterPro" id="IPR003593">
    <property type="entry name" value="AAA+_ATPase"/>
</dbReference>
<dbReference type="InterPro" id="IPR013525">
    <property type="entry name" value="ABC2_TM"/>
</dbReference>
<dbReference type="InterPro" id="IPR029481">
    <property type="entry name" value="ABC_trans_N"/>
</dbReference>
<dbReference type="InterPro" id="IPR003439">
    <property type="entry name" value="ABC_transporter-like_ATP-bd"/>
</dbReference>
<dbReference type="InterPro" id="IPR017871">
    <property type="entry name" value="ABC_transporter-like_CS"/>
</dbReference>
<dbReference type="InterPro" id="IPR034001">
    <property type="entry name" value="ABCG_PDR_1"/>
</dbReference>
<dbReference type="InterPro" id="IPR034003">
    <property type="entry name" value="ABCG_PDR_2"/>
</dbReference>
<dbReference type="InterPro" id="IPR005285">
    <property type="entry name" value="Drug-R_PDR/CDR"/>
</dbReference>
<dbReference type="InterPro" id="IPR027417">
    <property type="entry name" value="P-loop_NTPase"/>
</dbReference>
<dbReference type="InterPro" id="IPR010929">
    <property type="entry name" value="PDR_CDR_ABC"/>
</dbReference>
<dbReference type="NCBIfam" id="TIGR00956">
    <property type="entry name" value="3a01205"/>
    <property type="match status" value="1"/>
</dbReference>
<dbReference type="PANTHER" id="PTHR19241">
    <property type="entry name" value="ATP-BINDING CASSETTE TRANSPORTER"/>
    <property type="match status" value="1"/>
</dbReference>
<dbReference type="Pfam" id="PF01061">
    <property type="entry name" value="ABC2_membrane"/>
    <property type="match status" value="2"/>
</dbReference>
<dbReference type="Pfam" id="PF00005">
    <property type="entry name" value="ABC_tran"/>
    <property type="match status" value="2"/>
</dbReference>
<dbReference type="Pfam" id="PF14510">
    <property type="entry name" value="ABC_trans_N"/>
    <property type="match status" value="1"/>
</dbReference>
<dbReference type="Pfam" id="PF06422">
    <property type="entry name" value="PDR_CDR"/>
    <property type="match status" value="1"/>
</dbReference>
<dbReference type="SMART" id="SM00382">
    <property type="entry name" value="AAA"/>
    <property type="match status" value="2"/>
</dbReference>
<dbReference type="SUPFAM" id="SSF52540">
    <property type="entry name" value="P-loop containing nucleoside triphosphate hydrolases"/>
    <property type="match status" value="2"/>
</dbReference>
<dbReference type="PROSITE" id="PS00211">
    <property type="entry name" value="ABC_TRANSPORTER_1"/>
    <property type="match status" value="1"/>
</dbReference>
<dbReference type="PROSITE" id="PS50893">
    <property type="entry name" value="ABC_TRANSPORTER_2"/>
    <property type="match status" value="2"/>
</dbReference>
<feature type="chain" id="PRO_0000093435" description="Multidrug resistance protein CDR1">
    <location>
        <begin position="1"/>
        <end position="1501"/>
    </location>
</feature>
<feature type="topological domain" description="Cytoplasmic" evidence="1">
    <location>
        <begin position="1"/>
        <end position="513"/>
    </location>
</feature>
<feature type="transmembrane region" description="Helical" evidence="1">
    <location>
        <begin position="514"/>
        <end position="534"/>
    </location>
</feature>
<feature type="transmembrane region" description="Helical" evidence="1">
    <location>
        <begin position="549"/>
        <end position="569"/>
    </location>
</feature>
<feature type="transmembrane region" description="Helical" evidence="1">
    <location>
        <begin position="598"/>
        <end position="618"/>
    </location>
</feature>
<feature type="transmembrane region" description="Helical" evidence="1">
    <location>
        <begin position="623"/>
        <end position="643"/>
    </location>
</feature>
<feature type="transmembrane region" description="Helical" evidence="1">
    <location>
        <begin position="655"/>
        <end position="675"/>
    </location>
</feature>
<feature type="transmembrane region" description="Helical" evidence="1">
    <location>
        <begin position="765"/>
        <end position="785"/>
    </location>
</feature>
<feature type="topological domain" description="Cytoplasmic" evidence="1">
    <location>
        <begin position="786"/>
        <end position="1195"/>
    </location>
</feature>
<feature type="transmembrane region" description="Helical" evidence="1">
    <location>
        <begin position="1196"/>
        <end position="1216"/>
    </location>
</feature>
<feature type="transmembrane region" description="Helical" evidence="1">
    <location>
        <begin position="1230"/>
        <end position="1250"/>
    </location>
</feature>
<feature type="transmembrane region" description="Helical" evidence="1">
    <location>
        <begin position="1281"/>
        <end position="1301"/>
    </location>
</feature>
<feature type="transmembrane region" description="Helical" evidence="1">
    <location>
        <begin position="1315"/>
        <end position="1335"/>
    </location>
</feature>
<feature type="transmembrane region" description="Helical" evidence="1">
    <location>
        <begin position="1356"/>
        <end position="1376"/>
    </location>
</feature>
<feature type="transmembrane region" description="Helical" evidence="1">
    <location>
        <begin position="1467"/>
        <end position="1487"/>
    </location>
</feature>
<feature type="domain" description="ABC transporter 1" evidence="2">
    <location>
        <begin position="150"/>
        <end position="404"/>
    </location>
</feature>
<feature type="domain" description="ABC transporter 2" evidence="2">
    <location>
        <begin position="859"/>
        <end position="1103"/>
    </location>
</feature>
<feature type="region of interest" description="Disordered" evidence="3">
    <location>
        <begin position="1"/>
        <end position="30"/>
    </location>
</feature>
<feature type="compositionally biased region" description="Basic and acidic residues" evidence="3">
    <location>
        <begin position="8"/>
        <end position="18"/>
    </location>
</feature>
<feature type="binding site" evidence="2">
    <location>
        <begin position="895"/>
        <end position="902"/>
    </location>
    <ligand>
        <name>ATP</name>
        <dbReference type="ChEBI" id="CHEBI:30616"/>
    </ligand>
</feature>
<feature type="glycosylation site" description="N-linked (GlcNAc...) asparagine" evidence="1">
    <location>
        <position position="535"/>
    </location>
</feature>
<feature type="glycosylation site" description="N-linked (GlcNAc...) asparagine" evidence="1">
    <location>
        <position position="724"/>
    </location>
</feature>
<gene>
    <name type="primary">CDR1</name>
</gene>
<comment type="function">
    <text>Transporter, whose physiological function is not yet established. Confers resistance to the chemical cycloheximide.</text>
</comment>
<comment type="subcellular location">
    <subcellularLocation>
        <location evidence="4">Membrane</location>
        <topology evidence="4">Multi-pass membrane protein</topology>
    </subcellularLocation>
</comment>
<comment type="similarity">
    <text evidence="4">Belongs to the ABC transporter superfamily. ABCG family. PDR (TC 3.A.1.205) subfamily.</text>
</comment>
<reference key="1">
    <citation type="journal article" date="1995" name="Curr. Genet.">
        <title>Molecular cloning and characterization of a novel gene of Candida albicans, CDR1, conferring multiple resistance to drugs and antifungals.</title>
        <authorList>
            <person name="Prasad R."/>
            <person name="de Wergifosse P."/>
            <person name="Balzi E."/>
            <person name="Goffeau A."/>
        </authorList>
    </citation>
    <scope>NUCLEOTIDE SEQUENCE [GENOMIC DNA]</scope>
    <source>
        <strain>ATCC 64385 / 1001</strain>
    </source>
</reference>